<dbReference type="EC" id="1.6.5.2" evidence="2"/>
<dbReference type="EMBL" id="Z99708">
    <property type="protein sequence ID" value="CAB16805.1"/>
    <property type="molecule type" value="Genomic_DNA"/>
</dbReference>
<dbReference type="EMBL" id="AL161590">
    <property type="protein sequence ID" value="CAB80341.1"/>
    <property type="molecule type" value="Genomic_DNA"/>
</dbReference>
<dbReference type="EMBL" id="CP002687">
    <property type="protein sequence ID" value="AEE86697.1"/>
    <property type="molecule type" value="Genomic_DNA"/>
</dbReference>
<dbReference type="EMBL" id="AY087410">
    <property type="protein sequence ID" value="AAM64959.1"/>
    <property type="molecule type" value="mRNA"/>
</dbReference>
<dbReference type="PIR" id="A85434">
    <property type="entry name" value="A85434"/>
</dbReference>
<dbReference type="RefSeq" id="NP_195393.1">
    <property type="nucleotide sequence ID" value="NM_119839.6"/>
</dbReference>
<dbReference type="SMR" id="O23207"/>
<dbReference type="BioGRID" id="15109">
    <property type="interactions" value="3"/>
</dbReference>
<dbReference type="FunCoup" id="O23207">
    <property type="interactions" value="891"/>
</dbReference>
<dbReference type="STRING" id="3702.O23207"/>
<dbReference type="iPTMnet" id="O23207"/>
<dbReference type="SwissPalm" id="O23207"/>
<dbReference type="PaxDb" id="3702-AT4G36750.1"/>
<dbReference type="ProteomicsDB" id="230042"/>
<dbReference type="EnsemblPlants" id="AT4G36750.1">
    <property type="protein sequence ID" value="AT4G36750.1"/>
    <property type="gene ID" value="AT4G36750"/>
</dbReference>
<dbReference type="GeneID" id="829828"/>
<dbReference type="Gramene" id="AT4G36750.1">
    <property type="protein sequence ID" value="AT4G36750.1"/>
    <property type="gene ID" value="AT4G36750"/>
</dbReference>
<dbReference type="KEGG" id="ath:AT4G36750"/>
<dbReference type="Araport" id="AT4G36750"/>
<dbReference type="TAIR" id="AT4G36750"/>
<dbReference type="eggNOG" id="KOG3135">
    <property type="taxonomic scope" value="Eukaryota"/>
</dbReference>
<dbReference type="HOGENOM" id="CLU_051402_0_1_1"/>
<dbReference type="InParanoid" id="O23207"/>
<dbReference type="OMA" id="QAGGLWM"/>
<dbReference type="PhylomeDB" id="O23207"/>
<dbReference type="BioCyc" id="ARA:AT4G36750-MONOMER"/>
<dbReference type="CD-CODE" id="4299E36E">
    <property type="entry name" value="Nucleolus"/>
</dbReference>
<dbReference type="PRO" id="PR:O23207"/>
<dbReference type="Proteomes" id="UP000006548">
    <property type="component" value="Chromosome 4"/>
</dbReference>
<dbReference type="ExpressionAtlas" id="O23207">
    <property type="expression patterns" value="baseline and differential"/>
</dbReference>
<dbReference type="GO" id="GO:0005886">
    <property type="term" value="C:plasma membrane"/>
    <property type="evidence" value="ECO:0007005"/>
    <property type="project" value="TAIR"/>
</dbReference>
<dbReference type="GO" id="GO:0010181">
    <property type="term" value="F:FMN binding"/>
    <property type="evidence" value="ECO:0007669"/>
    <property type="project" value="InterPro"/>
</dbReference>
<dbReference type="GO" id="GO:0050136">
    <property type="term" value="F:NADH:ubiquinone reductase (non-electrogenic) activity"/>
    <property type="evidence" value="ECO:0007669"/>
    <property type="project" value="RHEA"/>
</dbReference>
<dbReference type="GO" id="GO:0008753">
    <property type="term" value="F:NADPH dehydrogenase (quinone) activity"/>
    <property type="evidence" value="ECO:0007669"/>
    <property type="project" value="RHEA"/>
</dbReference>
<dbReference type="FunFam" id="3.40.50.360:FF:000001">
    <property type="entry name" value="NAD(P)H dehydrogenase (Quinone) FQR1-like"/>
    <property type="match status" value="1"/>
</dbReference>
<dbReference type="Gene3D" id="3.40.50.360">
    <property type="match status" value="1"/>
</dbReference>
<dbReference type="InterPro" id="IPR008254">
    <property type="entry name" value="Flavodoxin/NO_synth"/>
</dbReference>
<dbReference type="InterPro" id="IPR029039">
    <property type="entry name" value="Flavoprotein-like_sf"/>
</dbReference>
<dbReference type="InterPro" id="IPR010089">
    <property type="entry name" value="Flavoprotein_WrbA-like"/>
</dbReference>
<dbReference type="NCBIfam" id="TIGR01755">
    <property type="entry name" value="flav_wrbA"/>
    <property type="match status" value="1"/>
</dbReference>
<dbReference type="NCBIfam" id="NF002999">
    <property type="entry name" value="PRK03767.1"/>
    <property type="match status" value="1"/>
</dbReference>
<dbReference type="PANTHER" id="PTHR30546">
    <property type="entry name" value="FLAVODOXIN-RELATED PROTEIN WRBA-RELATED"/>
    <property type="match status" value="1"/>
</dbReference>
<dbReference type="PANTHER" id="PTHR30546:SF3">
    <property type="entry name" value="NAD(P)H DEHYDROGENASE (QUINONE) FQR1-LIKE 2-RELATED"/>
    <property type="match status" value="1"/>
</dbReference>
<dbReference type="Pfam" id="PF00258">
    <property type="entry name" value="Flavodoxin_1"/>
    <property type="match status" value="1"/>
</dbReference>
<dbReference type="SUPFAM" id="SSF52218">
    <property type="entry name" value="Flavoproteins"/>
    <property type="match status" value="1"/>
</dbReference>
<dbReference type="PROSITE" id="PS50902">
    <property type="entry name" value="FLAVODOXIN_LIKE"/>
    <property type="match status" value="1"/>
</dbReference>
<proteinExistence type="evidence at protein level"/>
<reference key="1">
    <citation type="journal article" date="1998" name="Nature">
        <title>Analysis of 1.9 Mb of contiguous sequence from chromosome 4 of Arabidopsis thaliana.</title>
        <authorList>
            <person name="Bevan M."/>
            <person name="Bancroft I."/>
            <person name="Bent E."/>
            <person name="Love K."/>
            <person name="Goodman H.M."/>
            <person name="Dean C."/>
            <person name="Bergkamp R."/>
            <person name="Dirkse W."/>
            <person name="van Staveren M."/>
            <person name="Stiekema W."/>
            <person name="Drost L."/>
            <person name="Ridley P."/>
            <person name="Hudson S.-A."/>
            <person name="Patel K."/>
            <person name="Murphy G."/>
            <person name="Piffanelli P."/>
            <person name="Wedler H."/>
            <person name="Wedler E."/>
            <person name="Wambutt R."/>
            <person name="Weitzenegger T."/>
            <person name="Pohl T."/>
            <person name="Terryn N."/>
            <person name="Gielen J."/>
            <person name="Villarroel R."/>
            <person name="De Clercq R."/>
            <person name="van Montagu M."/>
            <person name="Lecharny A."/>
            <person name="Aubourg S."/>
            <person name="Gy I."/>
            <person name="Kreis M."/>
            <person name="Lao N."/>
            <person name="Kavanagh T."/>
            <person name="Hempel S."/>
            <person name="Kotter P."/>
            <person name="Entian K.-D."/>
            <person name="Rieger M."/>
            <person name="Schaefer M."/>
            <person name="Funk B."/>
            <person name="Mueller-Auer S."/>
            <person name="Silvey M."/>
            <person name="James R."/>
            <person name="Monfort A."/>
            <person name="Pons A."/>
            <person name="Puigdomenech P."/>
            <person name="Douka A."/>
            <person name="Voukelatou E."/>
            <person name="Milioni D."/>
            <person name="Hatzopoulos P."/>
            <person name="Piravandi E."/>
            <person name="Obermaier B."/>
            <person name="Hilbert H."/>
            <person name="Duesterhoeft A."/>
            <person name="Moores T."/>
            <person name="Jones J.D.G."/>
            <person name="Eneva T."/>
            <person name="Palme K."/>
            <person name="Benes V."/>
            <person name="Rechmann S."/>
            <person name="Ansorge W."/>
            <person name="Cooke R."/>
            <person name="Berger C."/>
            <person name="Delseny M."/>
            <person name="Voet M."/>
            <person name="Volckaert G."/>
            <person name="Mewes H.-W."/>
            <person name="Klosterman S."/>
            <person name="Schueller C."/>
            <person name="Chalwatzis N."/>
        </authorList>
    </citation>
    <scope>NUCLEOTIDE SEQUENCE [LARGE SCALE GENOMIC DNA]</scope>
    <source>
        <strain>cv. Columbia</strain>
    </source>
</reference>
<reference key="2">
    <citation type="journal article" date="1999" name="Nature">
        <title>Sequence and analysis of chromosome 4 of the plant Arabidopsis thaliana.</title>
        <authorList>
            <person name="Mayer K.F.X."/>
            <person name="Schueller C."/>
            <person name="Wambutt R."/>
            <person name="Murphy G."/>
            <person name="Volckaert G."/>
            <person name="Pohl T."/>
            <person name="Duesterhoeft A."/>
            <person name="Stiekema W."/>
            <person name="Entian K.-D."/>
            <person name="Terryn N."/>
            <person name="Harris B."/>
            <person name="Ansorge W."/>
            <person name="Brandt P."/>
            <person name="Grivell L.A."/>
            <person name="Rieger M."/>
            <person name="Weichselgartner M."/>
            <person name="de Simone V."/>
            <person name="Obermaier B."/>
            <person name="Mache R."/>
            <person name="Mueller M."/>
            <person name="Kreis M."/>
            <person name="Delseny M."/>
            <person name="Puigdomenech P."/>
            <person name="Watson M."/>
            <person name="Schmidtheini T."/>
            <person name="Reichert B."/>
            <person name="Portetelle D."/>
            <person name="Perez-Alonso M."/>
            <person name="Boutry M."/>
            <person name="Bancroft I."/>
            <person name="Vos P."/>
            <person name="Hoheisel J."/>
            <person name="Zimmermann W."/>
            <person name="Wedler H."/>
            <person name="Ridley P."/>
            <person name="Langham S.-A."/>
            <person name="McCullagh B."/>
            <person name="Bilham L."/>
            <person name="Robben J."/>
            <person name="van der Schueren J."/>
            <person name="Grymonprez B."/>
            <person name="Chuang Y.-J."/>
            <person name="Vandenbussche F."/>
            <person name="Braeken M."/>
            <person name="Weltjens I."/>
            <person name="Voet M."/>
            <person name="Bastiaens I."/>
            <person name="Aert R."/>
            <person name="Defoor E."/>
            <person name="Weitzenegger T."/>
            <person name="Bothe G."/>
            <person name="Ramsperger U."/>
            <person name="Hilbert H."/>
            <person name="Braun M."/>
            <person name="Holzer E."/>
            <person name="Brandt A."/>
            <person name="Peters S."/>
            <person name="van Staveren M."/>
            <person name="Dirkse W."/>
            <person name="Mooijman P."/>
            <person name="Klein Lankhorst R."/>
            <person name="Rose M."/>
            <person name="Hauf J."/>
            <person name="Koetter P."/>
            <person name="Berneiser S."/>
            <person name="Hempel S."/>
            <person name="Feldpausch M."/>
            <person name="Lamberth S."/>
            <person name="Van den Daele H."/>
            <person name="De Keyser A."/>
            <person name="Buysshaert C."/>
            <person name="Gielen J."/>
            <person name="Villarroel R."/>
            <person name="De Clercq R."/>
            <person name="van Montagu M."/>
            <person name="Rogers J."/>
            <person name="Cronin A."/>
            <person name="Quail M.A."/>
            <person name="Bray-Allen S."/>
            <person name="Clark L."/>
            <person name="Doggett J."/>
            <person name="Hall S."/>
            <person name="Kay M."/>
            <person name="Lennard N."/>
            <person name="McLay K."/>
            <person name="Mayes R."/>
            <person name="Pettett A."/>
            <person name="Rajandream M.A."/>
            <person name="Lyne M."/>
            <person name="Benes V."/>
            <person name="Rechmann S."/>
            <person name="Borkova D."/>
            <person name="Bloecker H."/>
            <person name="Scharfe M."/>
            <person name="Grimm M."/>
            <person name="Loehnert T.-H."/>
            <person name="Dose S."/>
            <person name="de Haan M."/>
            <person name="Maarse A.C."/>
            <person name="Schaefer M."/>
            <person name="Mueller-Auer S."/>
            <person name="Gabel C."/>
            <person name="Fuchs M."/>
            <person name="Fartmann B."/>
            <person name="Granderath K."/>
            <person name="Dauner D."/>
            <person name="Herzl A."/>
            <person name="Neumann S."/>
            <person name="Argiriou A."/>
            <person name="Vitale D."/>
            <person name="Liguori R."/>
            <person name="Piravandi E."/>
            <person name="Massenet O."/>
            <person name="Quigley F."/>
            <person name="Clabauld G."/>
            <person name="Muendlein A."/>
            <person name="Felber R."/>
            <person name="Schnabl S."/>
            <person name="Hiller R."/>
            <person name="Schmidt W."/>
            <person name="Lecharny A."/>
            <person name="Aubourg S."/>
            <person name="Chefdor F."/>
            <person name="Cooke R."/>
            <person name="Berger C."/>
            <person name="Monfort A."/>
            <person name="Casacuberta E."/>
            <person name="Gibbons T."/>
            <person name="Weber N."/>
            <person name="Vandenbol M."/>
            <person name="Bargues M."/>
            <person name="Terol J."/>
            <person name="Torres A."/>
            <person name="Perez-Perez A."/>
            <person name="Purnelle B."/>
            <person name="Bent E."/>
            <person name="Johnson S."/>
            <person name="Tacon D."/>
            <person name="Jesse T."/>
            <person name="Heijnen L."/>
            <person name="Schwarz S."/>
            <person name="Scholler P."/>
            <person name="Heber S."/>
            <person name="Francs P."/>
            <person name="Bielke C."/>
            <person name="Frishman D."/>
            <person name="Haase D."/>
            <person name="Lemcke K."/>
            <person name="Mewes H.-W."/>
            <person name="Stocker S."/>
            <person name="Zaccaria P."/>
            <person name="Bevan M."/>
            <person name="Wilson R.K."/>
            <person name="de la Bastide M."/>
            <person name="Habermann K."/>
            <person name="Parnell L."/>
            <person name="Dedhia N."/>
            <person name="Gnoj L."/>
            <person name="Schutz K."/>
            <person name="Huang E."/>
            <person name="Spiegel L."/>
            <person name="Sekhon M."/>
            <person name="Murray J."/>
            <person name="Sheet P."/>
            <person name="Cordes M."/>
            <person name="Abu-Threideh J."/>
            <person name="Stoneking T."/>
            <person name="Kalicki J."/>
            <person name="Graves T."/>
            <person name="Harmon G."/>
            <person name="Edwards J."/>
            <person name="Latreille P."/>
            <person name="Courtney L."/>
            <person name="Cloud J."/>
            <person name="Abbott A."/>
            <person name="Scott K."/>
            <person name="Johnson D."/>
            <person name="Minx P."/>
            <person name="Bentley D."/>
            <person name="Fulton B."/>
            <person name="Miller N."/>
            <person name="Greco T."/>
            <person name="Kemp K."/>
            <person name="Kramer J."/>
            <person name="Fulton L."/>
            <person name="Mardis E."/>
            <person name="Dante M."/>
            <person name="Pepin K."/>
            <person name="Hillier L.W."/>
            <person name="Nelson J."/>
            <person name="Spieth J."/>
            <person name="Ryan E."/>
            <person name="Andrews S."/>
            <person name="Geisel C."/>
            <person name="Layman D."/>
            <person name="Du H."/>
            <person name="Ali J."/>
            <person name="Berghoff A."/>
            <person name="Jones K."/>
            <person name="Drone K."/>
            <person name="Cotton M."/>
            <person name="Joshu C."/>
            <person name="Antonoiu B."/>
            <person name="Zidanic M."/>
            <person name="Strong C."/>
            <person name="Sun H."/>
            <person name="Lamar B."/>
            <person name="Yordan C."/>
            <person name="Ma P."/>
            <person name="Zhong J."/>
            <person name="Preston R."/>
            <person name="Vil D."/>
            <person name="Shekher M."/>
            <person name="Matero A."/>
            <person name="Shah R."/>
            <person name="Swaby I.K."/>
            <person name="O'Shaughnessy A."/>
            <person name="Rodriguez M."/>
            <person name="Hoffman J."/>
            <person name="Till S."/>
            <person name="Granat S."/>
            <person name="Shohdy N."/>
            <person name="Hasegawa A."/>
            <person name="Hameed A."/>
            <person name="Lodhi M."/>
            <person name="Johnson A."/>
            <person name="Chen E."/>
            <person name="Marra M.A."/>
            <person name="Martienssen R."/>
            <person name="McCombie W.R."/>
        </authorList>
    </citation>
    <scope>NUCLEOTIDE SEQUENCE [LARGE SCALE GENOMIC DNA]</scope>
    <source>
        <strain>cv. Columbia</strain>
    </source>
</reference>
<reference key="3">
    <citation type="journal article" date="2017" name="Plant J.">
        <title>Araport11: a complete reannotation of the Arabidopsis thaliana reference genome.</title>
        <authorList>
            <person name="Cheng C.Y."/>
            <person name="Krishnakumar V."/>
            <person name="Chan A.P."/>
            <person name="Thibaud-Nissen F."/>
            <person name="Schobel S."/>
            <person name="Town C.D."/>
        </authorList>
    </citation>
    <scope>GENOME REANNOTATION</scope>
    <source>
        <strain>cv. Columbia</strain>
    </source>
</reference>
<reference key="4">
    <citation type="submission" date="2002-03" db="EMBL/GenBank/DDBJ databases">
        <title>Full-length cDNA from Arabidopsis thaliana.</title>
        <authorList>
            <person name="Brover V.V."/>
            <person name="Troukhan M.E."/>
            <person name="Alexandrov N.A."/>
            <person name="Lu Y.-P."/>
            <person name="Flavell R.B."/>
            <person name="Feldmann K.A."/>
        </authorList>
    </citation>
    <scope>NUCLEOTIDE SEQUENCE [LARGE SCALE MRNA]</scope>
</reference>
<reference key="5">
    <citation type="journal article" date="2004" name="Mol. Cell. Proteomics">
        <title>Identification of new intrinsic proteins in Arabidopsis plasma membrane proteome.</title>
        <authorList>
            <person name="Marmagne A."/>
            <person name="Rouet M.-A."/>
            <person name="Ferro M."/>
            <person name="Rolland N."/>
            <person name="Alcon C."/>
            <person name="Joyard J."/>
            <person name="Garin J."/>
            <person name="Barbier-Brygoo H."/>
            <person name="Ephritikhine G."/>
        </authorList>
    </citation>
    <scope>IDENTIFICATION BY MASS SPECTROMETRY</scope>
    <scope>SUBCELLULAR LOCATION [LARGE SCALE ANALYSIS]</scope>
</reference>
<reference key="6">
    <citation type="journal article" date="2009" name="Plant Physiol.">
        <title>Large-scale Arabidopsis phosphoproteome profiling reveals novel chloroplast kinase substrates and phosphorylation networks.</title>
        <authorList>
            <person name="Reiland S."/>
            <person name="Messerli G."/>
            <person name="Baerenfaller K."/>
            <person name="Gerrits B."/>
            <person name="Endler A."/>
            <person name="Grossmann J."/>
            <person name="Gruissem W."/>
            <person name="Baginsky S."/>
        </authorList>
    </citation>
    <scope>IDENTIFICATION BY MASS SPECTROMETRY [LARGE SCALE ANALYSIS]</scope>
</reference>
<name>FQRL2_ARATH</name>
<organism>
    <name type="scientific">Arabidopsis thaliana</name>
    <name type="common">Mouse-ear cress</name>
    <dbReference type="NCBI Taxonomy" id="3702"/>
    <lineage>
        <taxon>Eukaryota</taxon>
        <taxon>Viridiplantae</taxon>
        <taxon>Streptophyta</taxon>
        <taxon>Embryophyta</taxon>
        <taxon>Tracheophyta</taxon>
        <taxon>Spermatophyta</taxon>
        <taxon>Magnoliopsida</taxon>
        <taxon>eudicotyledons</taxon>
        <taxon>Gunneridae</taxon>
        <taxon>Pentapetalae</taxon>
        <taxon>rosids</taxon>
        <taxon>malvids</taxon>
        <taxon>Brassicales</taxon>
        <taxon>Brassicaceae</taxon>
        <taxon>Camelineae</taxon>
        <taxon>Arabidopsis</taxon>
    </lineage>
</organism>
<keyword id="KW-1003">Cell membrane</keyword>
<keyword id="KW-0285">Flavoprotein</keyword>
<keyword id="KW-0288">FMN</keyword>
<keyword id="KW-0472">Membrane</keyword>
<keyword id="KW-0520">NAD</keyword>
<keyword id="KW-0521">NADP</keyword>
<keyword id="KW-0547">Nucleotide-binding</keyword>
<keyword id="KW-0560">Oxidoreductase</keyword>
<keyword id="KW-1185">Reference proteome</keyword>
<sequence>MGKGGGCVPSKKKKPATTGDGPGIDDDNDATNAPIQIDDDQTTIDGDRTTATNTGGTTTPAITTTAAKISSPLKIFVVFYSMYGHVESLAKRMKKGVDSVEGVEATLYRVPETLSQEVVEQMKAPVKDLEIPEITAAELTAADGFLFGFPTRYGCMAAQMKAFFDSTGSLWKEQSLAGKPAGFFVSTGTQGGGQETTAWTAITQLVHHGMLFVPIGYTFGAGMFKMDSIRGGSPYGAGVFAGDGSREATETELALAEHQGNYMAAIVKRLAQP</sequence>
<comment type="function">
    <text evidence="2">Catalyzes the transfer of electrons from NADH and NADPH to reduce quinone to the hydroquinone state.</text>
</comment>
<comment type="catalytic activity">
    <reaction evidence="2">
        <text>a quinone + NADH + H(+) = a quinol + NAD(+)</text>
        <dbReference type="Rhea" id="RHEA:46160"/>
        <dbReference type="ChEBI" id="CHEBI:15378"/>
        <dbReference type="ChEBI" id="CHEBI:24646"/>
        <dbReference type="ChEBI" id="CHEBI:57540"/>
        <dbReference type="ChEBI" id="CHEBI:57945"/>
        <dbReference type="ChEBI" id="CHEBI:132124"/>
        <dbReference type="EC" id="1.6.5.2"/>
    </reaction>
</comment>
<comment type="catalytic activity">
    <reaction evidence="2">
        <text>a quinone + NADPH + H(+) = a quinol + NADP(+)</text>
        <dbReference type="Rhea" id="RHEA:46164"/>
        <dbReference type="ChEBI" id="CHEBI:15378"/>
        <dbReference type="ChEBI" id="CHEBI:24646"/>
        <dbReference type="ChEBI" id="CHEBI:57783"/>
        <dbReference type="ChEBI" id="CHEBI:58349"/>
        <dbReference type="ChEBI" id="CHEBI:132124"/>
        <dbReference type="EC" id="1.6.5.2"/>
    </reaction>
</comment>
<comment type="cofactor">
    <cofactor evidence="2">
        <name>FMN</name>
        <dbReference type="ChEBI" id="CHEBI:58210"/>
    </cofactor>
    <text evidence="2">Binds 1 FMN per monomer.</text>
</comment>
<comment type="subcellular location">
    <subcellularLocation>
        <location evidence="5">Cell membrane</location>
    </subcellularLocation>
</comment>
<comment type="similarity">
    <text evidence="6">Belongs to the WrbA family.</text>
</comment>
<gene>
    <name evidence="7" type="ordered locus">At4g36750</name>
    <name evidence="8" type="ORF">C7A10.610</name>
</gene>
<accession>O23207</accession>
<accession>Q8LB59</accession>
<evidence type="ECO:0000250" key="1">
    <source>
        <dbReference type="UniProtKB" id="P0A8G6"/>
    </source>
</evidence>
<evidence type="ECO:0000250" key="2">
    <source>
        <dbReference type="UniProtKB" id="Q9LSQ5"/>
    </source>
</evidence>
<evidence type="ECO:0000255" key="3">
    <source>
        <dbReference type="PROSITE-ProRule" id="PRU00088"/>
    </source>
</evidence>
<evidence type="ECO:0000256" key="4">
    <source>
        <dbReference type="SAM" id="MobiDB-lite"/>
    </source>
</evidence>
<evidence type="ECO:0000269" key="5">
    <source>
    </source>
</evidence>
<evidence type="ECO:0000305" key="6"/>
<evidence type="ECO:0000312" key="7">
    <source>
        <dbReference type="Araport" id="AT4G36750"/>
    </source>
</evidence>
<evidence type="ECO:0000312" key="8">
    <source>
        <dbReference type="EMBL" id="CAB16805.1"/>
    </source>
</evidence>
<feature type="chain" id="PRO_0000431285" description="Probable NAD(P)H dehydrogenase (quinone) FQR1-like 2">
    <location>
        <begin position="1"/>
        <end position="273"/>
    </location>
</feature>
<feature type="domain" description="Flavodoxin-like" evidence="3">
    <location>
        <begin position="75"/>
        <end position="263"/>
    </location>
</feature>
<feature type="region of interest" description="Disordered" evidence="4">
    <location>
        <begin position="1"/>
        <end position="60"/>
    </location>
</feature>
<feature type="compositionally biased region" description="Low complexity" evidence="4">
    <location>
        <begin position="49"/>
        <end position="60"/>
    </location>
</feature>
<feature type="binding site" evidence="3">
    <location>
        <begin position="81"/>
        <end position="85"/>
    </location>
    <ligand>
        <name>FMN</name>
        <dbReference type="ChEBI" id="CHEBI:58210"/>
    </ligand>
</feature>
<feature type="binding site" evidence="1">
    <location>
        <position position="83"/>
    </location>
    <ligand>
        <name>NAD(+)</name>
        <dbReference type="ChEBI" id="CHEBI:57540"/>
    </ligand>
</feature>
<feature type="binding site" evidence="3">
    <location>
        <begin position="183"/>
        <end position="236"/>
    </location>
    <ligand>
        <name>FMN</name>
        <dbReference type="ChEBI" id="CHEBI:58210"/>
    </ligand>
</feature>
<feature type="binding site" evidence="1">
    <location>
        <position position="207"/>
    </location>
    <ligand>
        <name>FMN</name>
        <dbReference type="ChEBI" id="CHEBI:58210"/>
    </ligand>
</feature>
<feature type="sequence conflict" description="In Ref. 4; AAM64959." ref="4">
    <original>G</original>
    <variation>A</variation>
    <location>
        <position position="55"/>
    </location>
</feature>
<protein>
    <recommendedName>
        <fullName evidence="6">Probable NAD(P)H dehydrogenase (quinone) FQR1-like 2</fullName>
        <ecNumber evidence="2">1.6.5.2</ecNumber>
    </recommendedName>
</protein>